<proteinExistence type="inferred from homology"/>
<gene>
    <name evidence="1" type="primary">hisF</name>
    <name type="ordered locus">BAbS19_I19540</name>
</gene>
<organism>
    <name type="scientific">Brucella abortus (strain S19)</name>
    <dbReference type="NCBI Taxonomy" id="430066"/>
    <lineage>
        <taxon>Bacteria</taxon>
        <taxon>Pseudomonadati</taxon>
        <taxon>Pseudomonadota</taxon>
        <taxon>Alphaproteobacteria</taxon>
        <taxon>Hyphomicrobiales</taxon>
        <taxon>Brucellaceae</taxon>
        <taxon>Brucella/Ochrobactrum group</taxon>
        <taxon>Brucella</taxon>
    </lineage>
</organism>
<sequence length="261" mass="27474">MTLKARVIPCLDVKDGRVVKGVNFVDLIDAGDPVEAARAYDAAGADELCFLDITASSDNRETIFDVVARTAEQCFMPLTVGGGVRQVADIRKLLLAGADKVSINTAAVKNPEFVAEAADKFGNQCIVVAIDAKKVSGAGENDRWEIFTHGGRQPTGIDAVEFAQKVVDLGAGEILLTSMDRDGTKAGYDVALTRAVADSVRAPVIASGGVGTLDHLVAGIRDGHATAVLAASIFHFGTYTIGEAKRYMAEAGIPMRLDPVR</sequence>
<protein>
    <recommendedName>
        <fullName evidence="1">Imidazole glycerol phosphate synthase subunit HisF</fullName>
        <ecNumber evidence="1">4.3.2.10</ecNumber>
    </recommendedName>
    <alternativeName>
        <fullName evidence="1">IGP synthase cyclase subunit</fullName>
    </alternativeName>
    <alternativeName>
        <fullName evidence="1">IGP synthase subunit HisF</fullName>
    </alternativeName>
    <alternativeName>
        <fullName evidence="1">ImGP synthase subunit HisF</fullName>
        <shortName evidence="1">IGPS subunit HisF</shortName>
    </alternativeName>
</protein>
<reference key="1">
    <citation type="journal article" date="2008" name="PLoS ONE">
        <title>Genome sequence of Brucella abortus vaccine strain S19 compared to virulent strains yields candidate virulence genes.</title>
        <authorList>
            <person name="Crasta O.R."/>
            <person name="Folkerts O."/>
            <person name="Fei Z."/>
            <person name="Mane S.P."/>
            <person name="Evans C."/>
            <person name="Martino-Catt S."/>
            <person name="Bricker B."/>
            <person name="Yu G."/>
            <person name="Du L."/>
            <person name="Sobral B.W."/>
        </authorList>
    </citation>
    <scope>NUCLEOTIDE SEQUENCE [LARGE SCALE GENOMIC DNA]</scope>
    <source>
        <strain>S19</strain>
    </source>
</reference>
<dbReference type="EC" id="4.3.2.10" evidence="1"/>
<dbReference type="EMBL" id="CP000887">
    <property type="protein sequence ID" value="ACD73436.1"/>
    <property type="molecule type" value="Genomic_DNA"/>
</dbReference>
<dbReference type="RefSeq" id="WP_002965151.1">
    <property type="nucleotide sequence ID" value="NC_010742.1"/>
</dbReference>
<dbReference type="SMR" id="B2S984"/>
<dbReference type="GeneID" id="97534652"/>
<dbReference type="KEGG" id="bmc:BAbS19_I19540"/>
<dbReference type="HOGENOM" id="CLU_048577_4_0_5"/>
<dbReference type="UniPathway" id="UPA00031">
    <property type="reaction ID" value="UER00010"/>
</dbReference>
<dbReference type="Proteomes" id="UP000002565">
    <property type="component" value="Chromosome 1"/>
</dbReference>
<dbReference type="GO" id="GO:0005737">
    <property type="term" value="C:cytoplasm"/>
    <property type="evidence" value="ECO:0007669"/>
    <property type="project" value="UniProtKB-SubCell"/>
</dbReference>
<dbReference type="GO" id="GO:0000107">
    <property type="term" value="F:imidazoleglycerol-phosphate synthase activity"/>
    <property type="evidence" value="ECO:0007669"/>
    <property type="project" value="UniProtKB-UniRule"/>
</dbReference>
<dbReference type="GO" id="GO:0016829">
    <property type="term" value="F:lyase activity"/>
    <property type="evidence" value="ECO:0007669"/>
    <property type="project" value="UniProtKB-KW"/>
</dbReference>
<dbReference type="GO" id="GO:0000105">
    <property type="term" value="P:L-histidine biosynthetic process"/>
    <property type="evidence" value="ECO:0007669"/>
    <property type="project" value="UniProtKB-UniRule"/>
</dbReference>
<dbReference type="CDD" id="cd04731">
    <property type="entry name" value="HisF"/>
    <property type="match status" value="1"/>
</dbReference>
<dbReference type="FunFam" id="3.20.20.70:FF:000006">
    <property type="entry name" value="Imidazole glycerol phosphate synthase subunit HisF"/>
    <property type="match status" value="1"/>
</dbReference>
<dbReference type="Gene3D" id="3.20.20.70">
    <property type="entry name" value="Aldolase class I"/>
    <property type="match status" value="1"/>
</dbReference>
<dbReference type="HAMAP" id="MF_01013">
    <property type="entry name" value="HisF"/>
    <property type="match status" value="1"/>
</dbReference>
<dbReference type="InterPro" id="IPR013785">
    <property type="entry name" value="Aldolase_TIM"/>
</dbReference>
<dbReference type="InterPro" id="IPR006062">
    <property type="entry name" value="His_biosynth"/>
</dbReference>
<dbReference type="InterPro" id="IPR004651">
    <property type="entry name" value="HisF"/>
</dbReference>
<dbReference type="InterPro" id="IPR050064">
    <property type="entry name" value="IGPS_HisA/HisF"/>
</dbReference>
<dbReference type="InterPro" id="IPR011060">
    <property type="entry name" value="RibuloseP-bd_barrel"/>
</dbReference>
<dbReference type="NCBIfam" id="TIGR00735">
    <property type="entry name" value="hisF"/>
    <property type="match status" value="1"/>
</dbReference>
<dbReference type="PANTHER" id="PTHR21235:SF2">
    <property type="entry name" value="IMIDAZOLE GLYCEROL PHOSPHATE SYNTHASE HISHF"/>
    <property type="match status" value="1"/>
</dbReference>
<dbReference type="PANTHER" id="PTHR21235">
    <property type="entry name" value="IMIDAZOLE GLYCEROL PHOSPHATE SYNTHASE SUBUNIT HISF/H IGP SYNTHASE SUBUNIT HISF/H"/>
    <property type="match status" value="1"/>
</dbReference>
<dbReference type="Pfam" id="PF00977">
    <property type="entry name" value="His_biosynth"/>
    <property type="match status" value="1"/>
</dbReference>
<dbReference type="SUPFAM" id="SSF51366">
    <property type="entry name" value="Ribulose-phoshate binding barrel"/>
    <property type="match status" value="1"/>
</dbReference>
<comment type="function">
    <text evidence="1">IGPS catalyzes the conversion of PRFAR and glutamine to IGP, AICAR and glutamate. The HisF subunit catalyzes the cyclization activity that produces IGP and AICAR from PRFAR using the ammonia provided by the HisH subunit.</text>
</comment>
<comment type="catalytic activity">
    <reaction evidence="1">
        <text>5-[(5-phospho-1-deoxy-D-ribulos-1-ylimino)methylamino]-1-(5-phospho-beta-D-ribosyl)imidazole-4-carboxamide + L-glutamine = D-erythro-1-(imidazol-4-yl)glycerol 3-phosphate + 5-amino-1-(5-phospho-beta-D-ribosyl)imidazole-4-carboxamide + L-glutamate + H(+)</text>
        <dbReference type="Rhea" id="RHEA:24793"/>
        <dbReference type="ChEBI" id="CHEBI:15378"/>
        <dbReference type="ChEBI" id="CHEBI:29985"/>
        <dbReference type="ChEBI" id="CHEBI:58278"/>
        <dbReference type="ChEBI" id="CHEBI:58359"/>
        <dbReference type="ChEBI" id="CHEBI:58475"/>
        <dbReference type="ChEBI" id="CHEBI:58525"/>
        <dbReference type="EC" id="4.3.2.10"/>
    </reaction>
</comment>
<comment type="pathway">
    <text evidence="1">Amino-acid biosynthesis; L-histidine biosynthesis; L-histidine from 5-phospho-alpha-D-ribose 1-diphosphate: step 5/9.</text>
</comment>
<comment type="subunit">
    <text evidence="1">Heterodimer of HisH and HisF.</text>
</comment>
<comment type="subcellular location">
    <subcellularLocation>
        <location evidence="1">Cytoplasm</location>
    </subcellularLocation>
</comment>
<comment type="similarity">
    <text evidence="1">Belongs to the HisA/HisF family.</text>
</comment>
<name>HIS6_BRUA1</name>
<evidence type="ECO:0000255" key="1">
    <source>
        <dbReference type="HAMAP-Rule" id="MF_01013"/>
    </source>
</evidence>
<feature type="chain" id="PRO_1000134971" description="Imidazole glycerol phosphate synthase subunit HisF">
    <location>
        <begin position="1"/>
        <end position="261"/>
    </location>
</feature>
<feature type="active site" evidence="1">
    <location>
        <position position="12"/>
    </location>
</feature>
<feature type="active site" evidence="1">
    <location>
        <position position="131"/>
    </location>
</feature>
<accession>B2S984</accession>
<keyword id="KW-0028">Amino-acid biosynthesis</keyword>
<keyword id="KW-0963">Cytoplasm</keyword>
<keyword id="KW-0368">Histidine biosynthesis</keyword>
<keyword id="KW-0456">Lyase</keyword>